<feature type="chain" id="PRO_0000461905" description="Histidine racemase">
    <location>
        <begin position="1"/>
        <end position="263"/>
    </location>
</feature>
<feature type="active site" description="Proton acceptor" evidence="1">
    <location>
        <position position="67"/>
    </location>
</feature>
<feature type="active site" description="Proton donor" evidence="1">
    <location>
        <position position="209"/>
    </location>
</feature>
<keyword id="KW-0413">Isomerase</keyword>
<protein>
    <recommendedName>
        <fullName evidence="3">Histidine racemase</fullName>
        <ecNumber evidence="2">5.1.1.24</ecNumber>
    </recommendedName>
</protein>
<organism>
    <name type="scientific">Fusobacterium nucleatum subsp. nucleatum (strain ATCC 23726 / VPI 4351)</name>
    <dbReference type="NCBI Taxonomy" id="525283"/>
    <lineage>
        <taxon>Bacteria</taxon>
        <taxon>Fusobacteriati</taxon>
        <taxon>Fusobacteriota</taxon>
        <taxon>Fusobacteriia</taxon>
        <taxon>Fusobacteriales</taxon>
        <taxon>Fusobacteriaceae</taxon>
        <taxon>Fusobacterium</taxon>
    </lineage>
</organism>
<evidence type="ECO:0000250" key="1">
    <source>
        <dbReference type="UniProtKB" id="Q8RI81"/>
    </source>
</evidence>
<evidence type="ECO:0000269" key="2">
    <source>
    </source>
</evidence>
<evidence type="ECO:0000303" key="3">
    <source>
    </source>
</evidence>
<evidence type="ECO:0000305" key="4"/>
<evidence type="ECO:0000312" key="5">
    <source>
        <dbReference type="EMBL" id="EFG94488.1"/>
    </source>
</evidence>
<name>HISR_FUSN2</name>
<sequence length="263" mass="30092">MDGKVQVLDFIKINPAGNITILIDNFDIYDKNIPKLSEEIMKETNLYAEQVGFIKEKHLQMMGGEFCGNASRSFASLLAFRDKDFSEQKNYSITCSGESEVLDVDVRTDGAKNKFLAKIKMPKFISLEEISIDEYKLGLVRFSGISHFIFNIKENKETSFENIIDLVKKYLSNEDYSAFGIMFFDKDNLSMKPYVYVKELESGIYENSCASGTTALGYYLKKYKNLDRAKVVQPNGWLEYIIENDEMYIDGPVEIVAEGKVYI</sequence>
<proteinExistence type="evidence at protein level"/>
<gene>
    <name evidence="3" type="primary">hisR</name>
    <name evidence="5" type="ORF">HMPREF0397_2009</name>
</gene>
<accession>D5RFM4</accession>
<comment type="function">
    <text evidence="2">Cofactor-independent isomerase that catalyzes the reversible conversion of L-histidine to D-histidine (PubMed:39424140). May play a role in growth of F.nucleatum (PubMed:39424140).</text>
</comment>
<comment type="catalytic activity">
    <reaction evidence="2">
        <text>L-histidine = D-histidine</text>
        <dbReference type="Rhea" id="RHEA:59188"/>
        <dbReference type="ChEBI" id="CHEBI:57595"/>
        <dbReference type="ChEBI" id="CHEBI:142967"/>
        <dbReference type="EC" id="5.1.1.24"/>
    </reaction>
</comment>
<comment type="biophysicochemical properties">
    <kinetics>
        <KM evidence="2">5 mM for L-histidine</KM>
        <KM evidence="2">18 mM for D-histidine</KM>
        <text evidence="2">kcat is 42 sec(-1) with L-histidine as substrate. kcat is 64 sec(-1) with D-histidine as substrate.</text>
    </kinetics>
</comment>
<comment type="subunit">
    <text evidence="1">Homodimer.</text>
</comment>
<comment type="disruption phenotype">
    <text evidence="2">Knockout of the gene results in a small but reproducible lag in growth compared to wild-type strain during exponential phase (PubMed:39424140). Depletion of metal ions from the media results in the growth curve of the wild type organism approaching that of the deletion mutant (PubMed:39424140).</text>
</comment>
<comment type="similarity">
    <text evidence="4">Belongs to the histidine racemase family.</text>
</comment>
<reference evidence="5" key="1">
    <citation type="submission" date="2010-04" db="EMBL/GenBank/DDBJ databases">
        <authorList>
            <person name="Qin X."/>
            <person name="Bachman B."/>
            <person name="Battles P."/>
            <person name="Bell A."/>
            <person name="Bess C."/>
            <person name="Bickham C."/>
            <person name="Chaboub L."/>
            <person name="Chen D."/>
            <person name="Coyle M."/>
            <person name="Deiros D.R."/>
            <person name="Dinh H."/>
            <person name="Forbes L."/>
            <person name="Fowler G."/>
            <person name="Francisco L."/>
            <person name="Fu Q."/>
            <person name="Gubbala S."/>
            <person name="Hale W."/>
            <person name="Han Y."/>
            <person name="Hemphill L."/>
            <person name="Highlander S.K."/>
            <person name="Hirani K."/>
            <person name="Hogues M."/>
            <person name="Jackson L."/>
            <person name="Jakkamsetti A."/>
            <person name="Javaid M."/>
            <person name="Jiang H."/>
            <person name="Korchina V."/>
            <person name="Kovar C."/>
            <person name="Lara F."/>
            <person name="Lee S."/>
            <person name="Mata R."/>
            <person name="Mathew T."/>
            <person name="Moen C."/>
            <person name="Morales K."/>
            <person name="Munidasa M."/>
            <person name="Nazareth L."/>
            <person name="Ngo R."/>
            <person name="Nguyen L."/>
            <person name="Okwuonu G."/>
            <person name="Ongeri F."/>
            <person name="Patil S."/>
            <person name="Petrosino J."/>
            <person name="Pham C."/>
            <person name="Pham P."/>
            <person name="Pu L.-L."/>
            <person name="Puazo M."/>
            <person name="Raj R."/>
            <person name="Reid J."/>
            <person name="Rouhana J."/>
            <person name="Saada N."/>
            <person name="Shang Y."/>
            <person name="Simmons D."/>
            <person name="Thornton R."/>
            <person name="Warren J."/>
            <person name="Weissenberger G."/>
            <person name="Zhang J."/>
            <person name="Zhang L."/>
            <person name="Zhou C."/>
            <person name="Zhu D."/>
            <person name="Muzny D."/>
            <person name="Worley K."/>
            <person name="Gibbs R."/>
        </authorList>
    </citation>
    <scope>NUCLEOTIDE SEQUENCE [LARGE SCALE GENOMIC DNA]</scope>
    <source>
        <strain>ATCC 23726 / VPI 4351</strain>
    </source>
</reference>
<reference key="2">
    <citation type="journal article" date="2024" name="J. Biol. Chem.">
        <title>Discovery, characterization, and structure of a cofactor-independent histidine racemase from the oral pathogen Fusobacterium nucleatum.</title>
        <authorList>
            <person name="Lamer T."/>
            <person name="Chen P."/>
            <person name="Venter M.J."/>
            <person name="van Belkum M.J."/>
            <person name="Wijewardane A."/>
            <person name="Wu C."/>
            <person name="Lemieux M.J."/>
            <person name="Vederas J.C."/>
        </authorList>
    </citation>
    <scope>FUNCTION</scope>
    <scope>CATALYTIC ACTIVITY</scope>
    <scope>BIOPHYSICOCHEMICAL PROPERTIES</scope>
    <scope>DISRUPTION PHENOTYPE</scope>
    <source>
        <strain>ATCC 23726 / VPI 4351</strain>
    </source>
</reference>
<dbReference type="EC" id="5.1.1.24" evidence="2"/>
<dbReference type="EMBL" id="ADVK01000055">
    <property type="protein sequence ID" value="EFG94488.1"/>
    <property type="molecule type" value="Genomic_DNA"/>
</dbReference>
<dbReference type="RefSeq" id="WP_005904254.1">
    <property type="nucleotide sequence ID" value="NZ_ADVK01000055.1"/>
</dbReference>
<dbReference type="Proteomes" id="UP000003643">
    <property type="component" value="Unassembled WGS sequence"/>
</dbReference>
<dbReference type="GO" id="GO:0008837">
    <property type="term" value="F:diaminopimelate epimerase activity"/>
    <property type="evidence" value="ECO:0007669"/>
    <property type="project" value="UniProtKB-EC"/>
</dbReference>
<dbReference type="Gene3D" id="3.10.310.10">
    <property type="entry name" value="Diaminopimelate Epimerase, Chain A, domain 1"/>
    <property type="match status" value="2"/>
</dbReference>
<dbReference type="SUPFAM" id="SSF54506">
    <property type="entry name" value="Diaminopimelate epimerase-like"/>
    <property type="match status" value="1"/>
</dbReference>